<accession>Q7N5T1</accession>
<dbReference type="EC" id="3.1.1.61" evidence="1"/>
<dbReference type="EC" id="3.5.1.44" evidence="1"/>
<dbReference type="EMBL" id="BX571865">
    <property type="protein sequence ID" value="CAE14149.1"/>
    <property type="molecule type" value="Genomic_DNA"/>
</dbReference>
<dbReference type="RefSeq" id="WP_011146126.1">
    <property type="nucleotide sequence ID" value="NC_005126.1"/>
</dbReference>
<dbReference type="SMR" id="Q7N5T1"/>
<dbReference type="STRING" id="243265.plu1856"/>
<dbReference type="GeneID" id="48848133"/>
<dbReference type="KEGG" id="plu:plu1856"/>
<dbReference type="eggNOG" id="COG2201">
    <property type="taxonomic scope" value="Bacteria"/>
</dbReference>
<dbReference type="HOGENOM" id="CLU_000445_51_0_6"/>
<dbReference type="OrthoDB" id="9793421at2"/>
<dbReference type="Proteomes" id="UP000002514">
    <property type="component" value="Chromosome"/>
</dbReference>
<dbReference type="GO" id="GO:0005737">
    <property type="term" value="C:cytoplasm"/>
    <property type="evidence" value="ECO:0007669"/>
    <property type="project" value="UniProtKB-SubCell"/>
</dbReference>
<dbReference type="GO" id="GO:0000156">
    <property type="term" value="F:phosphorelay response regulator activity"/>
    <property type="evidence" value="ECO:0007669"/>
    <property type="project" value="InterPro"/>
</dbReference>
<dbReference type="GO" id="GO:0008984">
    <property type="term" value="F:protein-glutamate methylesterase activity"/>
    <property type="evidence" value="ECO:0007669"/>
    <property type="project" value="UniProtKB-UniRule"/>
</dbReference>
<dbReference type="GO" id="GO:0050568">
    <property type="term" value="F:protein-glutamine glutaminase activity"/>
    <property type="evidence" value="ECO:0007669"/>
    <property type="project" value="UniProtKB-UniRule"/>
</dbReference>
<dbReference type="GO" id="GO:0006935">
    <property type="term" value="P:chemotaxis"/>
    <property type="evidence" value="ECO:0007669"/>
    <property type="project" value="UniProtKB-UniRule"/>
</dbReference>
<dbReference type="CDD" id="cd16432">
    <property type="entry name" value="CheB_Rec"/>
    <property type="match status" value="1"/>
</dbReference>
<dbReference type="CDD" id="cd17541">
    <property type="entry name" value="REC_CheB-like"/>
    <property type="match status" value="1"/>
</dbReference>
<dbReference type="FunFam" id="3.40.50.180:FF:000001">
    <property type="entry name" value="Protein-glutamate methylesterase/protein-glutamine glutaminase"/>
    <property type="match status" value="1"/>
</dbReference>
<dbReference type="FunFam" id="3.40.50.2300:FF:000060">
    <property type="entry name" value="Protein-glutamate methylesterase/protein-glutamine glutaminase"/>
    <property type="match status" value="1"/>
</dbReference>
<dbReference type="Gene3D" id="3.40.50.2300">
    <property type="match status" value="1"/>
</dbReference>
<dbReference type="Gene3D" id="3.40.50.180">
    <property type="entry name" value="Methylesterase CheB, C-terminal domain"/>
    <property type="match status" value="1"/>
</dbReference>
<dbReference type="HAMAP" id="MF_00099">
    <property type="entry name" value="CheB_chemtxs"/>
    <property type="match status" value="1"/>
</dbReference>
<dbReference type="InterPro" id="IPR008248">
    <property type="entry name" value="CheB-like"/>
</dbReference>
<dbReference type="InterPro" id="IPR035909">
    <property type="entry name" value="CheB_C"/>
</dbReference>
<dbReference type="InterPro" id="IPR011006">
    <property type="entry name" value="CheY-like_superfamily"/>
</dbReference>
<dbReference type="InterPro" id="IPR000673">
    <property type="entry name" value="Sig_transdc_resp-reg_Me-estase"/>
</dbReference>
<dbReference type="InterPro" id="IPR001789">
    <property type="entry name" value="Sig_transdc_resp-reg_receiver"/>
</dbReference>
<dbReference type="NCBIfam" id="NF001965">
    <property type="entry name" value="PRK00742.1"/>
    <property type="match status" value="1"/>
</dbReference>
<dbReference type="NCBIfam" id="NF009206">
    <property type="entry name" value="PRK12555.1"/>
    <property type="match status" value="1"/>
</dbReference>
<dbReference type="PANTHER" id="PTHR42872">
    <property type="entry name" value="PROTEIN-GLUTAMATE METHYLESTERASE/PROTEIN-GLUTAMINE GLUTAMINASE"/>
    <property type="match status" value="1"/>
</dbReference>
<dbReference type="PANTHER" id="PTHR42872:SF6">
    <property type="entry name" value="PROTEIN-GLUTAMATE METHYLESTERASE_PROTEIN-GLUTAMINE GLUTAMINASE"/>
    <property type="match status" value="1"/>
</dbReference>
<dbReference type="Pfam" id="PF01339">
    <property type="entry name" value="CheB_methylest"/>
    <property type="match status" value="1"/>
</dbReference>
<dbReference type="Pfam" id="PF00072">
    <property type="entry name" value="Response_reg"/>
    <property type="match status" value="1"/>
</dbReference>
<dbReference type="PIRSF" id="PIRSF000876">
    <property type="entry name" value="RR_chemtxs_CheB"/>
    <property type="match status" value="1"/>
</dbReference>
<dbReference type="SMART" id="SM00448">
    <property type="entry name" value="REC"/>
    <property type="match status" value="1"/>
</dbReference>
<dbReference type="SUPFAM" id="SSF52172">
    <property type="entry name" value="CheY-like"/>
    <property type="match status" value="1"/>
</dbReference>
<dbReference type="SUPFAM" id="SSF52738">
    <property type="entry name" value="Methylesterase CheB, C-terminal domain"/>
    <property type="match status" value="1"/>
</dbReference>
<dbReference type="PROSITE" id="PS50122">
    <property type="entry name" value="CHEB"/>
    <property type="match status" value="1"/>
</dbReference>
<dbReference type="PROSITE" id="PS50110">
    <property type="entry name" value="RESPONSE_REGULATORY"/>
    <property type="match status" value="1"/>
</dbReference>
<organism>
    <name type="scientific">Photorhabdus laumondii subsp. laumondii (strain DSM 15139 / CIP 105565 / TT01)</name>
    <name type="common">Photorhabdus luminescens subsp. laumondii</name>
    <dbReference type="NCBI Taxonomy" id="243265"/>
    <lineage>
        <taxon>Bacteria</taxon>
        <taxon>Pseudomonadati</taxon>
        <taxon>Pseudomonadota</taxon>
        <taxon>Gammaproteobacteria</taxon>
        <taxon>Enterobacterales</taxon>
        <taxon>Morganellaceae</taxon>
        <taxon>Photorhabdus</taxon>
    </lineage>
</organism>
<evidence type="ECO:0000255" key="1">
    <source>
        <dbReference type="HAMAP-Rule" id="MF_00099"/>
    </source>
</evidence>
<keyword id="KW-0145">Chemotaxis</keyword>
<keyword id="KW-0963">Cytoplasm</keyword>
<keyword id="KW-0378">Hydrolase</keyword>
<keyword id="KW-0597">Phosphoprotein</keyword>
<keyword id="KW-1185">Reference proteome</keyword>
<feature type="chain" id="PRO_0000158007" description="Protein-glutamate methylesterase/protein-glutamine glutaminase">
    <location>
        <begin position="1"/>
        <end position="350"/>
    </location>
</feature>
<feature type="domain" description="Response regulatory" evidence="1">
    <location>
        <begin position="5"/>
        <end position="122"/>
    </location>
</feature>
<feature type="domain" description="CheB-type methylesterase" evidence="1">
    <location>
        <begin position="153"/>
        <end position="345"/>
    </location>
</feature>
<feature type="active site" evidence="1">
    <location>
        <position position="165"/>
    </location>
</feature>
<feature type="active site" evidence="1">
    <location>
        <position position="191"/>
    </location>
</feature>
<feature type="active site" evidence="1">
    <location>
        <position position="287"/>
    </location>
</feature>
<feature type="modified residue" description="4-aspartylphosphate" evidence="1">
    <location>
        <position position="56"/>
    </location>
</feature>
<reference key="1">
    <citation type="journal article" date="2003" name="Nat. Biotechnol.">
        <title>The genome sequence of the entomopathogenic bacterium Photorhabdus luminescens.</title>
        <authorList>
            <person name="Duchaud E."/>
            <person name="Rusniok C."/>
            <person name="Frangeul L."/>
            <person name="Buchrieser C."/>
            <person name="Givaudan A."/>
            <person name="Taourit S."/>
            <person name="Bocs S."/>
            <person name="Boursaux-Eude C."/>
            <person name="Chandler M."/>
            <person name="Charles J.-F."/>
            <person name="Dassa E."/>
            <person name="Derose R."/>
            <person name="Derzelle S."/>
            <person name="Freyssinet G."/>
            <person name="Gaudriault S."/>
            <person name="Medigue C."/>
            <person name="Lanois A."/>
            <person name="Powell K."/>
            <person name="Siguier P."/>
            <person name="Vincent R."/>
            <person name="Wingate V."/>
            <person name="Zouine M."/>
            <person name="Glaser P."/>
            <person name="Boemare N."/>
            <person name="Danchin A."/>
            <person name="Kunst F."/>
        </authorList>
    </citation>
    <scope>NUCLEOTIDE SEQUENCE [LARGE SCALE GENOMIC DNA]</scope>
    <source>
        <strain>DSM 15139 / CIP 105565 / TT01</strain>
    </source>
</reference>
<sequence>MNKITVLCVDDSALMRQIMREIINSHSDMEVVACAPDPLVARDLIKKHNPQVLTLDVEMPRMDGIDFLEKLMRLRPMPVVMISSLTAKGSEITLRALELGAVDFITKPQLGIREGMLAYSELIAEKIRTAAQAKLSVPIITPVSSAPLSFKPLLSSEKLIAVGASTGGTEAIKNLLQPLPVTSPALLITQHMPPGFTRSFAERLNKLSQITVKEAENGERILPGHAYIAPGDRHMELCRNGADYQVLITDAPAVNRHRPSVDVLFRSVAKFAGKNAVGVLLTGMGSDGAAGLLEMKQAGAYTLAQDEASCVVFGMPRAAIQMGAVDEVMDILKMSKRMLAKISSGQAVRI</sequence>
<comment type="function">
    <text evidence="1">Involved in chemotaxis. Part of a chemotaxis signal transduction system that modulates chemotaxis in response to various stimuli. Catalyzes the demethylation of specific methylglutamate residues introduced into the chemoreceptors (methyl-accepting chemotaxis proteins or MCP) by CheR. Also mediates the irreversible deamidation of specific glutamine residues to glutamic acid.</text>
</comment>
<comment type="catalytic activity">
    <reaction evidence="1">
        <text>[protein]-L-glutamate 5-O-methyl ester + H2O = L-glutamyl-[protein] + methanol + H(+)</text>
        <dbReference type="Rhea" id="RHEA:23236"/>
        <dbReference type="Rhea" id="RHEA-COMP:10208"/>
        <dbReference type="Rhea" id="RHEA-COMP:10311"/>
        <dbReference type="ChEBI" id="CHEBI:15377"/>
        <dbReference type="ChEBI" id="CHEBI:15378"/>
        <dbReference type="ChEBI" id="CHEBI:17790"/>
        <dbReference type="ChEBI" id="CHEBI:29973"/>
        <dbReference type="ChEBI" id="CHEBI:82795"/>
        <dbReference type="EC" id="3.1.1.61"/>
    </reaction>
</comment>
<comment type="catalytic activity">
    <reaction evidence="1">
        <text>L-glutaminyl-[protein] + H2O = L-glutamyl-[protein] + NH4(+)</text>
        <dbReference type="Rhea" id="RHEA:16441"/>
        <dbReference type="Rhea" id="RHEA-COMP:10207"/>
        <dbReference type="Rhea" id="RHEA-COMP:10208"/>
        <dbReference type="ChEBI" id="CHEBI:15377"/>
        <dbReference type="ChEBI" id="CHEBI:28938"/>
        <dbReference type="ChEBI" id="CHEBI:29973"/>
        <dbReference type="ChEBI" id="CHEBI:30011"/>
        <dbReference type="EC" id="3.5.1.44"/>
    </reaction>
</comment>
<comment type="subcellular location">
    <subcellularLocation>
        <location evidence="1">Cytoplasm</location>
    </subcellularLocation>
</comment>
<comment type="domain">
    <text evidence="1">Contains a C-terminal catalytic domain, and an N-terminal region which modulates catalytic activity.</text>
</comment>
<comment type="PTM">
    <text evidence="1">Phosphorylated by CheA. Phosphorylation of the N-terminal regulatory domain activates the methylesterase activity.</text>
</comment>
<comment type="similarity">
    <text evidence="1">Belongs to the CheB family.</text>
</comment>
<name>CHEB_PHOLL</name>
<gene>
    <name evidence="1" type="primary">cheB</name>
    <name type="ordered locus">plu1856</name>
</gene>
<proteinExistence type="inferred from homology"/>
<protein>
    <recommendedName>
        <fullName evidence="1">Protein-glutamate methylesterase/protein-glutamine glutaminase</fullName>
        <ecNumber evidence="1">3.1.1.61</ecNumber>
        <ecNumber evidence="1">3.5.1.44</ecNumber>
    </recommendedName>
</protein>